<name>Y1546_STAHJ</name>
<accession>Q4L670</accession>
<dbReference type="EC" id="5.3.2.-"/>
<dbReference type="EMBL" id="AP006716">
    <property type="protein sequence ID" value="BAE04855.1"/>
    <property type="molecule type" value="Genomic_DNA"/>
</dbReference>
<dbReference type="RefSeq" id="WP_011275837.1">
    <property type="nucleotide sequence ID" value="NC_007168.1"/>
</dbReference>
<dbReference type="SMR" id="Q4L670"/>
<dbReference type="KEGG" id="sha:SH1546"/>
<dbReference type="eggNOG" id="COG1942">
    <property type="taxonomic scope" value="Bacteria"/>
</dbReference>
<dbReference type="HOGENOM" id="CLU_148073_5_1_9"/>
<dbReference type="OrthoDB" id="9804765at2"/>
<dbReference type="Proteomes" id="UP000000543">
    <property type="component" value="Chromosome"/>
</dbReference>
<dbReference type="GO" id="GO:0016853">
    <property type="term" value="F:isomerase activity"/>
    <property type="evidence" value="ECO:0007669"/>
    <property type="project" value="UniProtKB-KW"/>
</dbReference>
<dbReference type="CDD" id="cd00491">
    <property type="entry name" value="4Oxalocrotonate_Tautomerase"/>
    <property type="match status" value="1"/>
</dbReference>
<dbReference type="Gene3D" id="3.30.429.10">
    <property type="entry name" value="Macrophage Migration Inhibitory Factor"/>
    <property type="match status" value="1"/>
</dbReference>
<dbReference type="InterPro" id="IPR018191">
    <property type="entry name" value="4-OT"/>
</dbReference>
<dbReference type="InterPro" id="IPR004370">
    <property type="entry name" value="4-OT-like_dom"/>
</dbReference>
<dbReference type="InterPro" id="IPR014347">
    <property type="entry name" value="Tautomerase/MIF_sf"/>
</dbReference>
<dbReference type="NCBIfam" id="NF002571">
    <property type="entry name" value="PRK02220.1"/>
    <property type="match status" value="1"/>
</dbReference>
<dbReference type="NCBIfam" id="TIGR00013">
    <property type="entry name" value="taut"/>
    <property type="match status" value="1"/>
</dbReference>
<dbReference type="PANTHER" id="PTHR35530:SF1">
    <property type="entry name" value="2-HYDROXYMUCONATE TAUTOMERASE"/>
    <property type="match status" value="1"/>
</dbReference>
<dbReference type="PANTHER" id="PTHR35530">
    <property type="entry name" value="TAUTOMERASE-RELATED"/>
    <property type="match status" value="1"/>
</dbReference>
<dbReference type="Pfam" id="PF01361">
    <property type="entry name" value="Tautomerase"/>
    <property type="match status" value="1"/>
</dbReference>
<dbReference type="SUPFAM" id="SSF55331">
    <property type="entry name" value="Tautomerase/MIF"/>
    <property type="match status" value="1"/>
</dbReference>
<feature type="initiator methionine" description="Removed" evidence="1">
    <location>
        <position position="1"/>
    </location>
</feature>
<feature type="chain" id="PRO_0000209548" description="Probable tautomerase SH1546">
    <location>
        <begin position="2"/>
        <end position="62"/>
    </location>
</feature>
<feature type="active site" description="Proton acceptor; via imino nitrogen" evidence="1">
    <location>
        <position position="2"/>
    </location>
</feature>
<reference key="1">
    <citation type="journal article" date="2005" name="J. Bacteriol.">
        <title>Whole-genome sequencing of Staphylococcus haemolyticus uncovers the extreme plasticity of its genome and the evolution of human-colonizing staphylococcal species.</title>
        <authorList>
            <person name="Takeuchi F."/>
            <person name="Watanabe S."/>
            <person name="Baba T."/>
            <person name="Yuzawa H."/>
            <person name="Ito T."/>
            <person name="Morimoto Y."/>
            <person name="Kuroda M."/>
            <person name="Cui L."/>
            <person name="Takahashi M."/>
            <person name="Ankai A."/>
            <person name="Baba S."/>
            <person name="Fukui S."/>
            <person name="Lee J.C."/>
            <person name="Hiramatsu K."/>
        </authorList>
    </citation>
    <scope>NUCLEOTIDE SEQUENCE [LARGE SCALE GENOMIC DNA]</scope>
    <source>
        <strain>JCSC1435</strain>
    </source>
</reference>
<evidence type="ECO:0000250" key="1"/>
<evidence type="ECO:0000305" key="2"/>
<sequence>MPIINVKLLEGRSDEQLKNLVTEVTNAVEKTTGANREAIHVIIEEMQKNHYGVAGVRKSDAE</sequence>
<protein>
    <recommendedName>
        <fullName>Probable tautomerase SH1546</fullName>
        <ecNumber>5.3.2.-</ecNumber>
    </recommendedName>
</protein>
<keyword id="KW-0413">Isomerase</keyword>
<comment type="similarity">
    <text evidence="2">Belongs to the 4-oxalocrotonate tautomerase family.</text>
</comment>
<proteinExistence type="inferred from homology"/>
<gene>
    <name type="ordered locus">SH1546</name>
</gene>
<organism>
    <name type="scientific">Staphylococcus haemolyticus (strain JCSC1435)</name>
    <dbReference type="NCBI Taxonomy" id="279808"/>
    <lineage>
        <taxon>Bacteria</taxon>
        <taxon>Bacillati</taxon>
        <taxon>Bacillota</taxon>
        <taxon>Bacilli</taxon>
        <taxon>Bacillales</taxon>
        <taxon>Staphylococcaceae</taxon>
        <taxon>Staphylococcus</taxon>
    </lineage>
</organism>